<sequence>MMKPKYERILIKLSGEALAGERGVGIDLKTVQEMAKEIQEVAESGIQIALVIGGGNLWRGEPAAEAGMDRVQADYTGMLGTVMNALVMADSLKQLGVDTRVQTAIAMQSVAEPYIRGRALRHLEKGRIVIFGAGIGSPYFSTDTTAALRAAEIEADAILMAKNGVDGVYNADPKKDANAVKFNELTHREVISRGLKIMDATASTLSMDNDIDLVVFNMNEPGNIKRVVFGEPIGTTVSNSSEEK</sequence>
<name>PYRH_STRS2</name>
<comment type="function">
    <text evidence="1">Catalyzes the reversible phosphorylation of UMP to UDP.</text>
</comment>
<comment type="catalytic activity">
    <reaction evidence="1">
        <text>UMP + ATP = UDP + ADP</text>
        <dbReference type="Rhea" id="RHEA:24400"/>
        <dbReference type="ChEBI" id="CHEBI:30616"/>
        <dbReference type="ChEBI" id="CHEBI:57865"/>
        <dbReference type="ChEBI" id="CHEBI:58223"/>
        <dbReference type="ChEBI" id="CHEBI:456216"/>
        <dbReference type="EC" id="2.7.4.22"/>
    </reaction>
</comment>
<comment type="activity regulation">
    <text evidence="1">Allosterically activated by GTP. Inhibited by UTP.</text>
</comment>
<comment type="pathway">
    <text evidence="1">Pyrimidine metabolism; CTP biosynthesis via de novo pathway; UDP from UMP (UMPK route): step 1/1.</text>
</comment>
<comment type="subunit">
    <text evidence="1">Homohexamer.</text>
</comment>
<comment type="subcellular location">
    <subcellularLocation>
        <location evidence="1">Cytoplasm</location>
    </subcellularLocation>
</comment>
<comment type="similarity">
    <text evidence="1">Belongs to the UMP kinase family.</text>
</comment>
<comment type="sequence caution" evidence="2">
    <conflict type="erroneous initiation">
        <sequence resource="EMBL-CDS" id="ABP92501"/>
    </conflict>
</comment>
<gene>
    <name evidence="1" type="primary">pyrH</name>
    <name type="ordered locus">SSU98_1343</name>
</gene>
<protein>
    <recommendedName>
        <fullName evidence="1">Uridylate kinase</fullName>
        <shortName evidence="1">UK</shortName>
        <ecNumber evidence="1">2.7.4.22</ecNumber>
    </recommendedName>
    <alternativeName>
        <fullName evidence="1">Uridine monophosphate kinase</fullName>
        <shortName evidence="1">UMP kinase</shortName>
        <shortName evidence="1">UMPK</shortName>
    </alternativeName>
</protein>
<organism>
    <name type="scientific">Streptococcus suis (strain 98HAH33)</name>
    <dbReference type="NCBI Taxonomy" id="391296"/>
    <lineage>
        <taxon>Bacteria</taxon>
        <taxon>Bacillati</taxon>
        <taxon>Bacillota</taxon>
        <taxon>Bacilli</taxon>
        <taxon>Lactobacillales</taxon>
        <taxon>Streptococcaceae</taxon>
        <taxon>Streptococcus</taxon>
    </lineage>
</organism>
<reference key="1">
    <citation type="journal article" date="2007" name="PLoS ONE">
        <title>A glimpse of streptococcal toxic shock syndrome from comparative genomics of S. suis 2 Chinese isolates.</title>
        <authorList>
            <person name="Chen C."/>
            <person name="Tang J."/>
            <person name="Dong W."/>
            <person name="Wang C."/>
            <person name="Feng Y."/>
            <person name="Wang J."/>
            <person name="Zheng F."/>
            <person name="Pan X."/>
            <person name="Liu D."/>
            <person name="Li M."/>
            <person name="Song Y."/>
            <person name="Zhu X."/>
            <person name="Sun H."/>
            <person name="Feng T."/>
            <person name="Guo Z."/>
            <person name="Ju A."/>
            <person name="Ge J."/>
            <person name="Dong Y."/>
            <person name="Sun W."/>
            <person name="Jiang Y."/>
            <person name="Wang J."/>
            <person name="Yan J."/>
            <person name="Yang H."/>
            <person name="Wang X."/>
            <person name="Gao G.F."/>
            <person name="Yang R."/>
            <person name="Wang J."/>
            <person name="Yu J."/>
        </authorList>
    </citation>
    <scope>NUCLEOTIDE SEQUENCE [LARGE SCALE GENOMIC DNA]</scope>
    <source>
        <strain>98HAH33</strain>
    </source>
</reference>
<keyword id="KW-0021">Allosteric enzyme</keyword>
<keyword id="KW-0067">ATP-binding</keyword>
<keyword id="KW-0963">Cytoplasm</keyword>
<keyword id="KW-0418">Kinase</keyword>
<keyword id="KW-0547">Nucleotide-binding</keyword>
<keyword id="KW-0665">Pyrimidine biosynthesis</keyword>
<keyword id="KW-0808">Transferase</keyword>
<accession>A4W2B2</accession>
<proteinExistence type="inferred from homology"/>
<dbReference type="EC" id="2.7.4.22" evidence="1"/>
<dbReference type="EMBL" id="CP000408">
    <property type="protein sequence ID" value="ABP92501.1"/>
    <property type="status" value="ALT_INIT"/>
    <property type="molecule type" value="Genomic_DNA"/>
</dbReference>
<dbReference type="SMR" id="A4W2B2"/>
<dbReference type="KEGG" id="ssv:SSU98_1343"/>
<dbReference type="HOGENOM" id="CLU_033861_0_0_9"/>
<dbReference type="UniPathway" id="UPA00159">
    <property type="reaction ID" value="UER00275"/>
</dbReference>
<dbReference type="GO" id="GO:0005737">
    <property type="term" value="C:cytoplasm"/>
    <property type="evidence" value="ECO:0007669"/>
    <property type="project" value="UniProtKB-SubCell"/>
</dbReference>
<dbReference type="GO" id="GO:0005524">
    <property type="term" value="F:ATP binding"/>
    <property type="evidence" value="ECO:0007669"/>
    <property type="project" value="UniProtKB-KW"/>
</dbReference>
<dbReference type="GO" id="GO:0033862">
    <property type="term" value="F:UMP kinase activity"/>
    <property type="evidence" value="ECO:0007669"/>
    <property type="project" value="UniProtKB-EC"/>
</dbReference>
<dbReference type="GO" id="GO:0044210">
    <property type="term" value="P:'de novo' CTP biosynthetic process"/>
    <property type="evidence" value="ECO:0007669"/>
    <property type="project" value="UniProtKB-UniRule"/>
</dbReference>
<dbReference type="GO" id="GO:0006225">
    <property type="term" value="P:UDP biosynthetic process"/>
    <property type="evidence" value="ECO:0007669"/>
    <property type="project" value="TreeGrafter"/>
</dbReference>
<dbReference type="CDD" id="cd04254">
    <property type="entry name" value="AAK_UMPK-PyrH-Ec"/>
    <property type="match status" value="1"/>
</dbReference>
<dbReference type="FunFam" id="3.40.1160.10:FF:000019">
    <property type="entry name" value="Uridylate kinase"/>
    <property type="match status" value="1"/>
</dbReference>
<dbReference type="Gene3D" id="3.40.1160.10">
    <property type="entry name" value="Acetylglutamate kinase-like"/>
    <property type="match status" value="1"/>
</dbReference>
<dbReference type="HAMAP" id="MF_01220_B">
    <property type="entry name" value="PyrH_B"/>
    <property type="match status" value="1"/>
</dbReference>
<dbReference type="InterPro" id="IPR036393">
    <property type="entry name" value="AceGlu_kinase-like_sf"/>
</dbReference>
<dbReference type="InterPro" id="IPR001048">
    <property type="entry name" value="Asp/Glu/Uridylate_kinase"/>
</dbReference>
<dbReference type="InterPro" id="IPR011817">
    <property type="entry name" value="Uridylate_kinase"/>
</dbReference>
<dbReference type="InterPro" id="IPR015963">
    <property type="entry name" value="Uridylate_kinase_bac"/>
</dbReference>
<dbReference type="NCBIfam" id="TIGR02075">
    <property type="entry name" value="pyrH_bact"/>
    <property type="match status" value="1"/>
</dbReference>
<dbReference type="PANTHER" id="PTHR42833">
    <property type="entry name" value="URIDYLATE KINASE"/>
    <property type="match status" value="1"/>
</dbReference>
<dbReference type="PANTHER" id="PTHR42833:SF4">
    <property type="entry name" value="URIDYLATE KINASE PUMPKIN, CHLOROPLASTIC"/>
    <property type="match status" value="1"/>
</dbReference>
<dbReference type="Pfam" id="PF00696">
    <property type="entry name" value="AA_kinase"/>
    <property type="match status" value="1"/>
</dbReference>
<dbReference type="PIRSF" id="PIRSF005650">
    <property type="entry name" value="Uridylate_kin"/>
    <property type="match status" value="1"/>
</dbReference>
<dbReference type="SUPFAM" id="SSF53633">
    <property type="entry name" value="Carbamate kinase-like"/>
    <property type="match status" value="1"/>
</dbReference>
<feature type="chain" id="PRO_0000323959" description="Uridylate kinase">
    <location>
        <begin position="1"/>
        <end position="244"/>
    </location>
</feature>
<feature type="region of interest" description="Involved in allosteric activation by GTP" evidence="1">
    <location>
        <begin position="20"/>
        <end position="25"/>
    </location>
</feature>
<feature type="binding site" evidence="1">
    <location>
        <begin position="12"/>
        <end position="15"/>
    </location>
    <ligand>
        <name>ATP</name>
        <dbReference type="ChEBI" id="CHEBI:30616"/>
    </ligand>
</feature>
<feature type="binding site" evidence="1">
    <location>
        <position position="54"/>
    </location>
    <ligand>
        <name>UMP</name>
        <dbReference type="ChEBI" id="CHEBI:57865"/>
    </ligand>
</feature>
<feature type="binding site" evidence="1">
    <location>
        <position position="55"/>
    </location>
    <ligand>
        <name>ATP</name>
        <dbReference type="ChEBI" id="CHEBI:30616"/>
    </ligand>
</feature>
<feature type="binding site" evidence="1">
    <location>
        <position position="59"/>
    </location>
    <ligand>
        <name>ATP</name>
        <dbReference type="ChEBI" id="CHEBI:30616"/>
    </ligand>
</feature>
<feature type="binding site" evidence="1">
    <location>
        <position position="74"/>
    </location>
    <ligand>
        <name>UMP</name>
        <dbReference type="ChEBI" id="CHEBI:57865"/>
    </ligand>
</feature>
<feature type="binding site" evidence="1">
    <location>
        <begin position="135"/>
        <end position="142"/>
    </location>
    <ligand>
        <name>UMP</name>
        <dbReference type="ChEBI" id="CHEBI:57865"/>
    </ligand>
</feature>
<feature type="binding site" evidence="1">
    <location>
        <position position="163"/>
    </location>
    <ligand>
        <name>ATP</name>
        <dbReference type="ChEBI" id="CHEBI:30616"/>
    </ligand>
</feature>
<feature type="binding site" evidence="1">
    <location>
        <position position="169"/>
    </location>
    <ligand>
        <name>ATP</name>
        <dbReference type="ChEBI" id="CHEBI:30616"/>
    </ligand>
</feature>
<feature type="binding site" evidence="1">
    <location>
        <position position="172"/>
    </location>
    <ligand>
        <name>ATP</name>
        <dbReference type="ChEBI" id="CHEBI:30616"/>
    </ligand>
</feature>
<evidence type="ECO:0000255" key="1">
    <source>
        <dbReference type="HAMAP-Rule" id="MF_01220"/>
    </source>
</evidence>
<evidence type="ECO:0000305" key="2"/>